<name>YIDC_SALG2</name>
<proteinExistence type="inferred from homology"/>
<comment type="function">
    <text evidence="1">Required for the insertion and/or proper folding and/or complex formation of integral membrane proteins into the membrane. Involved in integration of membrane proteins that insert both dependently and independently of the Sec translocase complex, as well as at least some lipoproteins. Aids folding of multispanning membrane proteins.</text>
</comment>
<comment type="subunit">
    <text evidence="1">Interacts with the Sec translocase complex via SecD. Specifically interacts with transmembrane segments of nascent integral membrane proteins during membrane integration.</text>
</comment>
<comment type="subcellular location">
    <subcellularLocation>
        <location evidence="1">Cell inner membrane</location>
        <topology evidence="1">Multi-pass membrane protein</topology>
    </subcellularLocation>
</comment>
<comment type="similarity">
    <text evidence="1">Belongs to the OXA1/ALB3/YidC family. Type 1 subfamily.</text>
</comment>
<keyword id="KW-0997">Cell inner membrane</keyword>
<keyword id="KW-1003">Cell membrane</keyword>
<keyword id="KW-0143">Chaperone</keyword>
<keyword id="KW-0472">Membrane</keyword>
<keyword id="KW-0653">Protein transport</keyword>
<keyword id="KW-0812">Transmembrane</keyword>
<keyword id="KW-1133">Transmembrane helix</keyword>
<keyword id="KW-0813">Transport</keyword>
<dbReference type="EMBL" id="AM933173">
    <property type="protein sequence ID" value="CAR39377.1"/>
    <property type="molecule type" value="Genomic_DNA"/>
</dbReference>
<dbReference type="RefSeq" id="WP_000378277.1">
    <property type="nucleotide sequence ID" value="NC_011274.1"/>
</dbReference>
<dbReference type="SMR" id="B5RFY3"/>
<dbReference type="KEGG" id="seg:SG3589"/>
<dbReference type="HOGENOM" id="CLU_016535_3_0_6"/>
<dbReference type="Proteomes" id="UP000008321">
    <property type="component" value="Chromosome"/>
</dbReference>
<dbReference type="GO" id="GO:0005886">
    <property type="term" value="C:plasma membrane"/>
    <property type="evidence" value="ECO:0007669"/>
    <property type="project" value="UniProtKB-SubCell"/>
</dbReference>
<dbReference type="GO" id="GO:0032977">
    <property type="term" value="F:membrane insertase activity"/>
    <property type="evidence" value="ECO:0007669"/>
    <property type="project" value="InterPro"/>
</dbReference>
<dbReference type="GO" id="GO:0051205">
    <property type="term" value="P:protein insertion into membrane"/>
    <property type="evidence" value="ECO:0007669"/>
    <property type="project" value="TreeGrafter"/>
</dbReference>
<dbReference type="GO" id="GO:0015031">
    <property type="term" value="P:protein transport"/>
    <property type="evidence" value="ECO:0007669"/>
    <property type="project" value="UniProtKB-KW"/>
</dbReference>
<dbReference type="CDD" id="cd20070">
    <property type="entry name" value="5TM_YidC_Alb3"/>
    <property type="match status" value="1"/>
</dbReference>
<dbReference type="CDD" id="cd19961">
    <property type="entry name" value="EcYidC-like_peri"/>
    <property type="match status" value="1"/>
</dbReference>
<dbReference type="FunFam" id="2.70.98.90:FF:000001">
    <property type="entry name" value="Membrane protein insertase YidC"/>
    <property type="match status" value="1"/>
</dbReference>
<dbReference type="Gene3D" id="2.70.98.90">
    <property type="match status" value="1"/>
</dbReference>
<dbReference type="HAMAP" id="MF_01810">
    <property type="entry name" value="YidC_type1"/>
    <property type="match status" value="1"/>
</dbReference>
<dbReference type="InterPro" id="IPR019998">
    <property type="entry name" value="Membr_insert_YidC"/>
</dbReference>
<dbReference type="InterPro" id="IPR028053">
    <property type="entry name" value="Membr_insert_YidC_N"/>
</dbReference>
<dbReference type="InterPro" id="IPR001708">
    <property type="entry name" value="YidC/ALB3/OXA1/COX18"/>
</dbReference>
<dbReference type="InterPro" id="IPR028055">
    <property type="entry name" value="YidC/Oxa/ALB_C"/>
</dbReference>
<dbReference type="InterPro" id="IPR047196">
    <property type="entry name" value="YidC_ALB_C"/>
</dbReference>
<dbReference type="InterPro" id="IPR038221">
    <property type="entry name" value="YidC_periplasmic_sf"/>
</dbReference>
<dbReference type="NCBIfam" id="NF002351">
    <property type="entry name" value="PRK01318.1-1"/>
    <property type="match status" value="1"/>
</dbReference>
<dbReference type="NCBIfam" id="NF002352">
    <property type="entry name" value="PRK01318.1-3"/>
    <property type="match status" value="1"/>
</dbReference>
<dbReference type="NCBIfam" id="NF002353">
    <property type="entry name" value="PRK01318.1-4"/>
    <property type="match status" value="1"/>
</dbReference>
<dbReference type="NCBIfam" id="TIGR03593">
    <property type="entry name" value="yidC_nterm"/>
    <property type="match status" value="1"/>
</dbReference>
<dbReference type="NCBIfam" id="TIGR03592">
    <property type="entry name" value="yidC_oxa1_cterm"/>
    <property type="match status" value="1"/>
</dbReference>
<dbReference type="PANTHER" id="PTHR12428:SF65">
    <property type="entry name" value="CYTOCHROME C OXIDASE ASSEMBLY PROTEIN COX18, MITOCHONDRIAL"/>
    <property type="match status" value="1"/>
</dbReference>
<dbReference type="PANTHER" id="PTHR12428">
    <property type="entry name" value="OXA1"/>
    <property type="match status" value="1"/>
</dbReference>
<dbReference type="Pfam" id="PF02096">
    <property type="entry name" value="60KD_IMP"/>
    <property type="match status" value="1"/>
</dbReference>
<dbReference type="Pfam" id="PF14849">
    <property type="entry name" value="YidC_periplas"/>
    <property type="match status" value="1"/>
</dbReference>
<dbReference type="PRINTS" id="PR00701">
    <property type="entry name" value="60KDINNERMP"/>
</dbReference>
<dbReference type="PRINTS" id="PR01900">
    <property type="entry name" value="YIDCPROTEIN"/>
</dbReference>
<organism>
    <name type="scientific">Salmonella gallinarum (strain 287/91 / NCTC 13346)</name>
    <dbReference type="NCBI Taxonomy" id="550538"/>
    <lineage>
        <taxon>Bacteria</taxon>
        <taxon>Pseudomonadati</taxon>
        <taxon>Pseudomonadota</taxon>
        <taxon>Gammaproteobacteria</taxon>
        <taxon>Enterobacterales</taxon>
        <taxon>Enterobacteriaceae</taxon>
        <taxon>Salmonella</taxon>
    </lineage>
</organism>
<sequence>MDSQRNLLVIALLFVSFMIWQAWEQDKNPQPQTQQTTQTTTTAAGSAADQGVPASGQGKMITVKTDVLDLTINTRGGDVEQALLPAYPKELGSNEPFQLLETTPQFIYQAQSGLTGRDGPDNPANGPRPLYNVEKDAFVLADGQNELQVPMTYTDAAGNTFTKTFVFKRGDYAVNVNYSVQNAGEKPLEVSTFGQLKQSVNLPPHRDTGSSNFALHTFRGAAYSTPDEKYEKYKFDTIADNENLNVSSKGGWVAMLQQYFATAWIPRNDGTNNFYTANLGNGIVAIGYKAQPVLVQPGQTGAMTSTLWVGPEIQDKMAAVAPHLDLTVDYGWLWFISQPLFKLLKWIHSFVGNWGFSIIIITFIVRGIMYPLTKAQYTSMAKMRMLQPKIQAMRERLGDDKQRQSQEMMALYKAEKVNPLGGCFPLIIQMPIFLALYYMLMGSIELRHAPFALWIHDLSAQDPYYILPILMGVTMFFIQKMSPTTVTDPMQQKIMTFMPVIFTVFFLWFPSGLVLYYIVSNLVTIIQQQLIYRGLEKRGLHSREKKKS</sequence>
<feature type="chain" id="PRO_1000187699" description="Membrane protein insertase YidC">
    <location>
        <begin position="1"/>
        <end position="548"/>
    </location>
</feature>
<feature type="transmembrane region" description="Helical" evidence="1">
    <location>
        <begin position="6"/>
        <end position="26"/>
    </location>
</feature>
<feature type="transmembrane region" description="Helical" evidence="1">
    <location>
        <begin position="350"/>
        <end position="370"/>
    </location>
</feature>
<feature type="transmembrane region" description="Helical" evidence="1">
    <location>
        <begin position="424"/>
        <end position="444"/>
    </location>
</feature>
<feature type="transmembrane region" description="Helical" evidence="1">
    <location>
        <begin position="458"/>
        <end position="478"/>
    </location>
</feature>
<feature type="transmembrane region" description="Helical" evidence="1">
    <location>
        <begin position="499"/>
        <end position="519"/>
    </location>
</feature>
<feature type="region of interest" description="Disordered" evidence="2">
    <location>
        <begin position="28"/>
        <end position="56"/>
    </location>
</feature>
<feature type="compositionally biased region" description="Low complexity" evidence="2">
    <location>
        <begin position="29"/>
        <end position="42"/>
    </location>
</feature>
<evidence type="ECO:0000255" key="1">
    <source>
        <dbReference type="HAMAP-Rule" id="MF_01810"/>
    </source>
</evidence>
<evidence type="ECO:0000256" key="2">
    <source>
        <dbReference type="SAM" id="MobiDB-lite"/>
    </source>
</evidence>
<protein>
    <recommendedName>
        <fullName evidence="1">Membrane protein insertase YidC</fullName>
    </recommendedName>
    <alternativeName>
        <fullName evidence="1">Foldase YidC</fullName>
    </alternativeName>
    <alternativeName>
        <fullName evidence="1">Membrane integrase YidC</fullName>
    </alternativeName>
    <alternativeName>
        <fullName evidence="1">Membrane protein YidC</fullName>
    </alternativeName>
</protein>
<reference key="1">
    <citation type="journal article" date="2008" name="Genome Res.">
        <title>Comparative genome analysis of Salmonella enteritidis PT4 and Salmonella gallinarum 287/91 provides insights into evolutionary and host adaptation pathways.</title>
        <authorList>
            <person name="Thomson N.R."/>
            <person name="Clayton D.J."/>
            <person name="Windhorst D."/>
            <person name="Vernikos G."/>
            <person name="Davidson S."/>
            <person name="Churcher C."/>
            <person name="Quail M.A."/>
            <person name="Stevens M."/>
            <person name="Jones M.A."/>
            <person name="Watson M."/>
            <person name="Barron A."/>
            <person name="Layton A."/>
            <person name="Pickard D."/>
            <person name="Kingsley R.A."/>
            <person name="Bignell A."/>
            <person name="Clark L."/>
            <person name="Harris B."/>
            <person name="Ormond D."/>
            <person name="Abdellah Z."/>
            <person name="Brooks K."/>
            <person name="Cherevach I."/>
            <person name="Chillingworth T."/>
            <person name="Woodward J."/>
            <person name="Norberczak H."/>
            <person name="Lord A."/>
            <person name="Arrowsmith C."/>
            <person name="Jagels K."/>
            <person name="Moule S."/>
            <person name="Mungall K."/>
            <person name="Saunders M."/>
            <person name="Whitehead S."/>
            <person name="Chabalgoity J.A."/>
            <person name="Maskell D."/>
            <person name="Humphreys T."/>
            <person name="Roberts M."/>
            <person name="Barrow P.A."/>
            <person name="Dougan G."/>
            <person name="Parkhill J."/>
        </authorList>
    </citation>
    <scope>NUCLEOTIDE SEQUENCE [LARGE SCALE GENOMIC DNA]</scope>
    <source>
        <strain>287/91 / NCTC 13346</strain>
    </source>
</reference>
<gene>
    <name evidence="1" type="primary">yidC</name>
    <name type="ordered locus">SG3589</name>
</gene>
<accession>B5RFY3</accession>